<name>RECX_LACP3</name>
<dbReference type="EMBL" id="CP000423">
    <property type="protein sequence ID" value="ABJ70543.1"/>
    <property type="molecule type" value="Genomic_DNA"/>
</dbReference>
<dbReference type="RefSeq" id="YP_806985.1">
    <property type="nucleotide sequence ID" value="NC_008526.1"/>
</dbReference>
<dbReference type="SMR" id="Q037S9"/>
<dbReference type="STRING" id="321967.LSEI_1771"/>
<dbReference type="PaxDb" id="321967-LSEI_1771"/>
<dbReference type="KEGG" id="lca:LSEI_1771"/>
<dbReference type="PATRIC" id="fig|321967.11.peg.1750"/>
<dbReference type="HOGENOM" id="CLU_066607_4_0_9"/>
<dbReference type="Proteomes" id="UP000001651">
    <property type="component" value="Chromosome"/>
</dbReference>
<dbReference type="GO" id="GO:0005737">
    <property type="term" value="C:cytoplasm"/>
    <property type="evidence" value="ECO:0007669"/>
    <property type="project" value="UniProtKB-SubCell"/>
</dbReference>
<dbReference type="GO" id="GO:0006282">
    <property type="term" value="P:regulation of DNA repair"/>
    <property type="evidence" value="ECO:0007669"/>
    <property type="project" value="UniProtKB-UniRule"/>
</dbReference>
<dbReference type="Gene3D" id="1.10.10.10">
    <property type="entry name" value="Winged helix-like DNA-binding domain superfamily/Winged helix DNA-binding domain"/>
    <property type="match status" value="3"/>
</dbReference>
<dbReference type="HAMAP" id="MF_01114">
    <property type="entry name" value="RecX"/>
    <property type="match status" value="1"/>
</dbReference>
<dbReference type="InterPro" id="IPR053926">
    <property type="entry name" value="RecX_HTH_1st"/>
</dbReference>
<dbReference type="InterPro" id="IPR053924">
    <property type="entry name" value="RecX_HTH_2nd"/>
</dbReference>
<dbReference type="InterPro" id="IPR003783">
    <property type="entry name" value="Regulatory_RecX"/>
</dbReference>
<dbReference type="InterPro" id="IPR036388">
    <property type="entry name" value="WH-like_DNA-bd_sf"/>
</dbReference>
<dbReference type="PANTHER" id="PTHR33602">
    <property type="entry name" value="REGULATORY PROTEIN RECX FAMILY PROTEIN"/>
    <property type="match status" value="1"/>
</dbReference>
<dbReference type="PANTHER" id="PTHR33602:SF1">
    <property type="entry name" value="REGULATORY PROTEIN RECX FAMILY PROTEIN"/>
    <property type="match status" value="1"/>
</dbReference>
<dbReference type="Pfam" id="PF21982">
    <property type="entry name" value="RecX_HTH1"/>
    <property type="match status" value="1"/>
</dbReference>
<dbReference type="Pfam" id="PF02631">
    <property type="entry name" value="RecX_HTH2"/>
    <property type="match status" value="1"/>
</dbReference>
<sequence>MSEITKITAQKRRGRYNIFIDGTYAFPVSETTLVDYRLAKGMVLTAETIAQIKSSEVTAMGLEIGLTYISHQSRTSKEVSDRLAKEDLPADVIQKVLTRLTDLGFLDDADYAHRYIEEHLKMGELGPRTLQHKLQQKGLKPDLLANELAAIPTTAWLDAAVRAGQKNLRHHQHRAYKDQLQRLRVALMQKGFDDTTIQTAIATIDPQPDPEAESDLLKLEAAKQWRLKAKYGDRERKQKV</sequence>
<accession>Q037S9</accession>
<keyword id="KW-0963">Cytoplasm</keyword>
<keyword id="KW-1185">Reference proteome</keyword>
<feature type="chain" id="PRO_1000137173" description="Regulatory protein RecX">
    <location>
        <begin position="1"/>
        <end position="240"/>
    </location>
</feature>
<reference key="1">
    <citation type="journal article" date="2006" name="Proc. Natl. Acad. Sci. U.S.A.">
        <title>Comparative genomics of the lactic acid bacteria.</title>
        <authorList>
            <person name="Makarova K.S."/>
            <person name="Slesarev A."/>
            <person name="Wolf Y.I."/>
            <person name="Sorokin A."/>
            <person name="Mirkin B."/>
            <person name="Koonin E.V."/>
            <person name="Pavlov A."/>
            <person name="Pavlova N."/>
            <person name="Karamychev V."/>
            <person name="Polouchine N."/>
            <person name="Shakhova V."/>
            <person name="Grigoriev I."/>
            <person name="Lou Y."/>
            <person name="Rohksar D."/>
            <person name="Lucas S."/>
            <person name="Huang K."/>
            <person name="Goodstein D.M."/>
            <person name="Hawkins T."/>
            <person name="Plengvidhya V."/>
            <person name="Welker D."/>
            <person name="Hughes J."/>
            <person name="Goh Y."/>
            <person name="Benson A."/>
            <person name="Baldwin K."/>
            <person name="Lee J.-H."/>
            <person name="Diaz-Muniz I."/>
            <person name="Dosti B."/>
            <person name="Smeianov V."/>
            <person name="Wechter W."/>
            <person name="Barabote R."/>
            <person name="Lorca G."/>
            <person name="Altermann E."/>
            <person name="Barrangou R."/>
            <person name="Ganesan B."/>
            <person name="Xie Y."/>
            <person name="Rawsthorne H."/>
            <person name="Tamir D."/>
            <person name="Parker C."/>
            <person name="Breidt F."/>
            <person name="Broadbent J.R."/>
            <person name="Hutkins R."/>
            <person name="O'Sullivan D."/>
            <person name="Steele J."/>
            <person name="Unlu G."/>
            <person name="Saier M.H. Jr."/>
            <person name="Klaenhammer T."/>
            <person name="Richardson P."/>
            <person name="Kozyavkin S."/>
            <person name="Weimer B.C."/>
            <person name="Mills D.A."/>
        </authorList>
    </citation>
    <scope>NUCLEOTIDE SEQUENCE [LARGE SCALE GENOMIC DNA]</scope>
    <source>
        <strain>ATCC 334 / BCRC 17002 / CCUG 31169 / CIP 107868 / KCTC 3260 / NRRL B-441</strain>
    </source>
</reference>
<evidence type="ECO:0000255" key="1">
    <source>
        <dbReference type="HAMAP-Rule" id="MF_01114"/>
    </source>
</evidence>
<gene>
    <name evidence="1" type="primary">recX</name>
    <name type="ordered locus">LSEI_1771</name>
</gene>
<proteinExistence type="inferred from homology"/>
<protein>
    <recommendedName>
        <fullName evidence="1">Regulatory protein RecX</fullName>
    </recommendedName>
</protein>
<comment type="function">
    <text evidence="1">Modulates RecA activity.</text>
</comment>
<comment type="subcellular location">
    <subcellularLocation>
        <location evidence="1">Cytoplasm</location>
    </subcellularLocation>
</comment>
<comment type="similarity">
    <text evidence="1">Belongs to the RecX family.</text>
</comment>
<organism>
    <name type="scientific">Lacticaseibacillus paracasei (strain ATCC 334 / BCRC 17002 / CCUG 31169 / CIP 107868 / KCTC 3260 / NRRL B-441)</name>
    <name type="common">Lactobacillus paracasei</name>
    <dbReference type="NCBI Taxonomy" id="321967"/>
    <lineage>
        <taxon>Bacteria</taxon>
        <taxon>Bacillati</taxon>
        <taxon>Bacillota</taxon>
        <taxon>Bacilli</taxon>
        <taxon>Lactobacillales</taxon>
        <taxon>Lactobacillaceae</taxon>
        <taxon>Lacticaseibacillus</taxon>
    </lineage>
</organism>